<proteinExistence type="evidence at transcript level"/>
<keyword id="KW-0106">Calcium</keyword>
<keyword id="KW-0130">Cell adhesion</keyword>
<keyword id="KW-0165">Cleavage on pair of basic residues</keyword>
<keyword id="KW-1015">Disulfide bond</keyword>
<keyword id="KW-0325">Glycoprotein</keyword>
<keyword id="KW-0401">Integrin</keyword>
<keyword id="KW-0460">Magnesium</keyword>
<keyword id="KW-0472">Membrane</keyword>
<keyword id="KW-0479">Metal-binding</keyword>
<keyword id="KW-0675">Receptor</keyword>
<keyword id="KW-1185">Reference proteome</keyword>
<keyword id="KW-0677">Repeat</keyword>
<keyword id="KW-0732">Signal</keyword>
<keyword id="KW-0812">Transmembrane</keyword>
<keyword id="KW-1133">Transmembrane helix</keyword>
<gene>
    <name type="primary">Itgae</name>
</gene>
<accession>Q60677</accession>
<accession>B1AUD5</accession>
<reference key="1">
    <citation type="journal article" date="1994" name="Immunity">
        <title>Murine M290 integrin expression modulated by mast cell activation.</title>
        <authorList>
            <person name="Smith T.J."/>
            <person name="Ducharme L.A."/>
            <person name="Shaw S.K."/>
            <person name="Parker C.M."/>
            <person name="Brenner M.B."/>
            <person name="Kilshaw P.J."/>
            <person name="Weis J.H."/>
        </authorList>
    </citation>
    <scope>NUCLEOTIDE SEQUENCE [MRNA]</scope>
    <source>
        <strain>AKR/J</strain>
    </source>
</reference>
<reference key="2">
    <citation type="journal article" date="2009" name="PLoS Biol.">
        <title>Lineage-specific biology revealed by a finished genome assembly of the mouse.</title>
        <authorList>
            <person name="Church D.M."/>
            <person name="Goodstadt L."/>
            <person name="Hillier L.W."/>
            <person name="Zody M.C."/>
            <person name="Goldstein S."/>
            <person name="She X."/>
            <person name="Bult C.J."/>
            <person name="Agarwala R."/>
            <person name="Cherry J.L."/>
            <person name="DiCuccio M."/>
            <person name="Hlavina W."/>
            <person name="Kapustin Y."/>
            <person name="Meric P."/>
            <person name="Maglott D."/>
            <person name="Birtle Z."/>
            <person name="Marques A.C."/>
            <person name="Graves T."/>
            <person name="Zhou S."/>
            <person name="Teague B."/>
            <person name="Potamousis K."/>
            <person name="Churas C."/>
            <person name="Place M."/>
            <person name="Herschleb J."/>
            <person name="Runnheim R."/>
            <person name="Forrest D."/>
            <person name="Amos-Landgraf J."/>
            <person name="Schwartz D.C."/>
            <person name="Cheng Z."/>
            <person name="Lindblad-Toh K."/>
            <person name="Eichler E.E."/>
            <person name="Ponting C.P."/>
        </authorList>
    </citation>
    <scope>NUCLEOTIDE SEQUENCE [LARGE SCALE GENOMIC DNA]</scope>
    <source>
        <strain>C57BL/6J</strain>
    </source>
</reference>
<comment type="function">
    <text>Integrin alpha-E/beta-7 is a receptor for E-cadherin. It mediates adhesion of intra-epithelial T-lymphocytes to epithelial cell monolayers. Mice expressing a null mutation of the alpha-E subunit gene exhibit a marked reduction in the numbers of intraepithelial lymphocytes in the gut and in the development of gut-associated lymphoid aggregates, supporting a specific role for this integrin in mediating retention of lymphocytes in the intestinal wall.</text>
</comment>
<comment type="subunit">
    <text>Heterodimer of an alpha and a beta subunit. The alpha subunit is composed of a heavy and a light chains linked by a disulfide bond. Alpha-E associates with beta-7.</text>
</comment>
<comment type="subcellular location">
    <subcellularLocation>
        <location>Membrane</location>
        <topology>Single-pass type I membrane protein</topology>
    </subcellularLocation>
</comment>
<comment type="domain">
    <text>The integrin I-domain (insert) is a VWFA domain. Integrins with I-domains do not undergo protease cleavage.</text>
</comment>
<comment type="similarity">
    <text evidence="7">Belongs to the integrin alpha chain family.</text>
</comment>
<organism>
    <name type="scientific">Mus musculus</name>
    <name type="common">Mouse</name>
    <dbReference type="NCBI Taxonomy" id="10090"/>
    <lineage>
        <taxon>Eukaryota</taxon>
        <taxon>Metazoa</taxon>
        <taxon>Chordata</taxon>
        <taxon>Craniata</taxon>
        <taxon>Vertebrata</taxon>
        <taxon>Euteleostomi</taxon>
        <taxon>Mammalia</taxon>
        <taxon>Eutheria</taxon>
        <taxon>Euarchontoglires</taxon>
        <taxon>Glires</taxon>
        <taxon>Rodentia</taxon>
        <taxon>Myomorpha</taxon>
        <taxon>Muroidea</taxon>
        <taxon>Muridae</taxon>
        <taxon>Murinae</taxon>
        <taxon>Mus</taxon>
        <taxon>Mus</taxon>
    </lineage>
</organism>
<dbReference type="EMBL" id="U12236">
    <property type="protein sequence ID" value="AAC52142.1"/>
    <property type="molecule type" value="mRNA"/>
</dbReference>
<dbReference type="EMBL" id="AL670399">
    <property type="status" value="NOT_ANNOTATED_CDS"/>
    <property type="molecule type" value="Genomic_DNA"/>
</dbReference>
<dbReference type="CCDS" id="CCDS24995.1"/>
<dbReference type="RefSeq" id="NP_032425.2">
    <property type="nucleotide sequence ID" value="NM_008399.4"/>
</dbReference>
<dbReference type="SMR" id="Q60677"/>
<dbReference type="BioGRID" id="200821">
    <property type="interactions" value="2"/>
</dbReference>
<dbReference type="ComplexPortal" id="CPX-3127">
    <property type="entry name" value="Integrin alphaE-beta7 complex"/>
</dbReference>
<dbReference type="FunCoup" id="Q60677">
    <property type="interactions" value="44"/>
</dbReference>
<dbReference type="STRING" id="10090.ENSMUSP00000006101"/>
<dbReference type="GlyCosmos" id="Q60677">
    <property type="glycosylation" value="17 sites, No reported glycans"/>
</dbReference>
<dbReference type="GlyGen" id="Q60677">
    <property type="glycosylation" value="18 sites, 1 O-linked glycan (1 site)"/>
</dbReference>
<dbReference type="iPTMnet" id="Q60677"/>
<dbReference type="PhosphoSitePlus" id="Q60677"/>
<dbReference type="PaxDb" id="10090-ENSMUSP00000006101"/>
<dbReference type="ProteomicsDB" id="268893"/>
<dbReference type="Antibodypedia" id="10997">
    <property type="antibodies" value="1163 antibodies from 43 providers"/>
</dbReference>
<dbReference type="DNASU" id="16407"/>
<dbReference type="Ensembl" id="ENSMUST00000006101.4">
    <property type="protein sequence ID" value="ENSMUSP00000006101.4"/>
    <property type="gene ID" value="ENSMUSG00000005947.12"/>
</dbReference>
<dbReference type="GeneID" id="16407"/>
<dbReference type="KEGG" id="mmu:16407"/>
<dbReference type="UCSC" id="uc007jzy.2">
    <property type="organism name" value="mouse"/>
</dbReference>
<dbReference type="AGR" id="MGI:1298377"/>
<dbReference type="CTD" id="3682"/>
<dbReference type="MGI" id="MGI:1298377">
    <property type="gene designation" value="Itgae"/>
</dbReference>
<dbReference type="VEuPathDB" id="HostDB:ENSMUSG00000005947"/>
<dbReference type="eggNOG" id="KOG3637">
    <property type="taxonomic scope" value="Eukaryota"/>
</dbReference>
<dbReference type="GeneTree" id="ENSGT00940000161532"/>
<dbReference type="HOGENOM" id="CLU_004111_0_0_1"/>
<dbReference type="InParanoid" id="Q60677"/>
<dbReference type="OMA" id="FKRMQKP"/>
<dbReference type="OrthoDB" id="6132182at2759"/>
<dbReference type="PhylomeDB" id="Q60677"/>
<dbReference type="TreeFam" id="TF105391"/>
<dbReference type="Reactome" id="R-MMU-216083">
    <property type="pathway name" value="Integrin cell surface interactions"/>
</dbReference>
<dbReference type="BioGRID-ORCS" id="16407">
    <property type="hits" value="2 hits in 78 CRISPR screens"/>
</dbReference>
<dbReference type="ChiTaRS" id="Itgae">
    <property type="organism name" value="mouse"/>
</dbReference>
<dbReference type="PRO" id="PR:Q60677"/>
<dbReference type="Proteomes" id="UP000000589">
    <property type="component" value="Chromosome 11"/>
</dbReference>
<dbReference type="RNAct" id="Q60677">
    <property type="molecule type" value="protein"/>
</dbReference>
<dbReference type="Bgee" id="ENSMUSG00000005947">
    <property type="expression patterns" value="Expressed in seminiferous tubule of testis and 77 other cell types or tissues"/>
</dbReference>
<dbReference type="GO" id="GO:0009897">
    <property type="term" value="C:external side of plasma membrane"/>
    <property type="evidence" value="ECO:0000314"/>
    <property type="project" value="MGI"/>
</dbReference>
<dbReference type="GO" id="GO:0008305">
    <property type="term" value="C:integrin complex"/>
    <property type="evidence" value="ECO:0007669"/>
    <property type="project" value="InterPro"/>
</dbReference>
<dbReference type="GO" id="GO:0046872">
    <property type="term" value="F:metal ion binding"/>
    <property type="evidence" value="ECO:0007669"/>
    <property type="project" value="UniProtKB-KW"/>
</dbReference>
<dbReference type="GO" id="GO:0007155">
    <property type="term" value="P:cell adhesion"/>
    <property type="evidence" value="ECO:0007669"/>
    <property type="project" value="UniProtKB-KW"/>
</dbReference>
<dbReference type="GO" id="GO:0007229">
    <property type="term" value="P:integrin-mediated signaling pathway"/>
    <property type="evidence" value="ECO:0007669"/>
    <property type="project" value="UniProtKB-KW"/>
</dbReference>
<dbReference type="CDD" id="cd01469">
    <property type="entry name" value="vWA_integrins_alpha_subunit"/>
    <property type="match status" value="1"/>
</dbReference>
<dbReference type="FunFam" id="3.40.50.410:FF:000067">
    <property type="entry name" value="Integrin alpha M"/>
    <property type="match status" value="1"/>
</dbReference>
<dbReference type="Gene3D" id="1.20.5.930">
    <property type="entry name" value="Bicelle-embedded integrin alpha(iib) transmembrane segment"/>
    <property type="match status" value="1"/>
</dbReference>
<dbReference type="Gene3D" id="2.130.10.130">
    <property type="entry name" value="Integrin alpha, N-terminal"/>
    <property type="match status" value="1"/>
</dbReference>
<dbReference type="Gene3D" id="2.60.40.1460">
    <property type="entry name" value="Integrin domains. Chain A, domain 2"/>
    <property type="match status" value="1"/>
</dbReference>
<dbReference type="Gene3D" id="2.60.40.1510">
    <property type="entry name" value="ntegrin, alpha v. Chain A, domain 3"/>
    <property type="match status" value="1"/>
</dbReference>
<dbReference type="Gene3D" id="3.40.50.410">
    <property type="entry name" value="von Willebrand factor, type A domain"/>
    <property type="match status" value="1"/>
</dbReference>
<dbReference type="InterPro" id="IPR013517">
    <property type="entry name" value="FG-GAP"/>
</dbReference>
<dbReference type="InterPro" id="IPR013519">
    <property type="entry name" value="Int_alpha_beta-p"/>
</dbReference>
<dbReference type="InterPro" id="IPR000413">
    <property type="entry name" value="Integrin_alpha"/>
</dbReference>
<dbReference type="InterPro" id="IPR018184">
    <property type="entry name" value="Integrin_alpha_C_CS"/>
</dbReference>
<dbReference type="InterPro" id="IPR048285">
    <property type="entry name" value="Integrin_alpha_Ig-like_2"/>
</dbReference>
<dbReference type="InterPro" id="IPR028994">
    <property type="entry name" value="Integrin_alpha_N"/>
</dbReference>
<dbReference type="InterPro" id="IPR032695">
    <property type="entry name" value="Integrin_dom_sf"/>
</dbReference>
<dbReference type="InterPro" id="IPR002035">
    <property type="entry name" value="VWF_A"/>
</dbReference>
<dbReference type="InterPro" id="IPR036465">
    <property type="entry name" value="vWFA_dom_sf"/>
</dbReference>
<dbReference type="PANTHER" id="PTHR23220">
    <property type="entry name" value="INTEGRIN ALPHA"/>
    <property type="match status" value="1"/>
</dbReference>
<dbReference type="PANTHER" id="PTHR23220:SF79">
    <property type="entry name" value="INTEGRIN ALPHA-E"/>
    <property type="match status" value="1"/>
</dbReference>
<dbReference type="Pfam" id="PF01839">
    <property type="entry name" value="FG-GAP"/>
    <property type="match status" value="3"/>
</dbReference>
<dbReference type="Pfam" id="PF20805">
    <property type="entry name" value="Integrin_A_Ig_2"/>
    <property type="match status" value="1"/>
</dbReference>
<dbReference type="Pfam" id="PF00357">
    <property type="entry name" value="Integrin_alpha"/>
    <property type="match status" value="1"/>
</dbReference>
<dbReference type="Pfam" id="PF00092">
    <property type="entry name" value="VWA"/>
    <property type="match status" value="1"/>
</dbReference>
<dbReference type="PRINTS" id="PR01185">
    <property type="entry name" value="INTEGRINA"/>
</dbReference>
<dbReference type="PRINTS" id="PR00453">
    <property type="entry name" value="VWFADOMAIN"/>
</dbReference>
<dbReference type="SMART" id="SM00191">
    <property type="entry name" value="Int_alpha"/>
    <property type="match status" value="4"/>
</dbReference>
<dbReference type="SMART" id="SM00327">
    <property type="entry name" value="VWA"/>
    <property type="match status" value="1"/>
</dbReference>
<dbReference type="SUPFAM" id="SSF69318">
    <property type="entry name" value="Integrin alpha N-terminal domain"/>
    <property type="match status" value="1"/>
</dbReference>
<dbReference type="SUPFAM" id="SSF69179">
    <property type="entry name" value="Integrin domains"/>
    <property type="match status" value="2"/>
</dbReference>
<dbReference type="SUPFAM" id="SSF53300">
    <property type="entry name" value="vWA-like"/>
    <property type="match status" value="1"/>
</dbReference>
<dbReference type="PROSITE" id="PS51470">
    <property type="entry name" value="FG_GAP"/>
    <property type="match status" value="6"/>
</dbReference>
<dbReference type="PROSITE" id="PS00242">
    <property type="entry name" value="INTEGRIN_ALPHA"/>
    <property type="match status" value="1"/>
</dbReference>
<dbReference type="PROSITE" id="PS50234">
    <property type="entry name" value="VWFA"/>
    <property type="match status" value="1"/>
</dbReference>
<feature type="signal peptide" evidence="1">
    <location>
        <begin position="1"/>
        <end position="19"/>
    </location>
</feature>
<feature type="chain" id="PRO_0000016286" description="Integrin alpha-E">
    <location>
        <begin position="20"/>
        <end position="1167"/>
    </location>
</feature>
<feature type="chain" id="PRO_0000016287" description="Integrin alpha-E light chain">
    <location>
        <begin position="20"/>
        <end position="181"/>
    </location>
</feature>
<feature type="chain" id="PRO_0000016288" description="Integrin alpha-E heavy chain">
    <location>
        <begin position="183"/>
        <end position="1167"/>
    </location>
</feature>
<feature type="topological domain" description="Extracellular" evidence="3">
    <location>
        <begin position="20"/>
        <end position="1114"/>
    </location>
</feature>
<feature type="transmembrane region" description="Helical" evidence="3">
    <location>
        <begin position="1115"/>
        <end position="1137"/>
    </location>
</feature>
<feature type="topological domain" description="Cytoplasmic" evidence="3">
    <location>
        <begin position="1138"/>
        <end position="1167"/>
    </location>
</feature>
<feature type="repeat" description="FG-GAP 1">
    <location>
        <begin position="27"/>
        <end position="81"/>
    </location>
</feature>
<feature type="repeat" description="FG-GAP 2" evidence="5">
    <location>
        <begin position="84"/>
        <end position="142"/>
    </location>
</feature>
<feature type="domain" description="VWFA" evidence="4">
    <location>
        <begin position="193"/>
        <end position="382"/>
    </location>
</feature>
<feature type="repeat" description="FG-GAP 3" evidence="5">
    <location>
        <begin position="383"/>
        <end position="435"/>
    </location>
</feature>
<feature type="repeat" description="FG-GAP 4" evidence="5">
    <location>
        <begin position="438"/>
        <end position="491"/>
    </location>
</feature>
<feature type="repeat" description="FG-GAP 5" evidence="5">
    <location>
        <begin position="492"/>
        <end position="552"/>
    </location>
</feature>
<feature type="repeat" description="FG-GAP 6" evidence="5">
    <location>
        <begin position="555"/>
        <end position="619"/>
    </location>
</feature>
<feature type="repeat" description="FG-GAP 7" evidence="5">
    <location>
        <begin position="623"/>
        <end position="683"/>
    </location>
</feature>
<feature type="region of interest" description="X-domain (extra domain)">
    <location>
        <begin position="149"/>
        <end position="192"/>
    </location>
</feature>
<feature type="region of interest" description="Disordered" evidence="6">
    <location>
        <begin position="163"/>
        <end position="191"/>
    </location>
</feature>
<feature type="short sequence motif" description="GFFKR motif">
    <location>
        <begin position="1140"/>
        <end position="1144"/>
    </location>
</feature>
<feature type="binding site" evidence="2">
    <location>
        <position position="514"/>
    </location>
    <ligand>
        <name>Ca(2+)</name>
        <dbReference type="ChEBI" id="CHEBI:29108"/>
        <label>1</label>
    </ligand>
</feature>
<feature type="binding site" evidence="2">
    <location>
        <position position="516"/>
    </location>
    <ligand>
        <name>Ca(2+)</name>
        <dbReference type="ChEBI" id="CHEBI:29108"/>
        <label>1</label>
    </ligand>
</feature>
<feature type="binding site" evidence="2">
    <location>
        <position position="518"/>
    </location>
    <ligand>
        <name>Ca(2+)</name>
        <dbReference type="ChEBI" id="CHEBI:29108"/>
        <label>1</label>
    </ligand>
</feature>
<feature type="binding site" evidence="2">
    <location>
        <position position="522"/>
    </location>
    <ligand>
        <name>Ca(2+)</name>
        <dbReference type="ChEBI" id="CHEBI:29108"/>
        <label>1</label>
    </ligand>
</feature>
<feature type="binding site" evidence="2">
    <location>
        <position position="578"/>
    </location>
    <ligand>
        <name>Ca(2+)</name>
        <dbReference type="ChEBI" id="CHEBI:29108"/>
        <label>2</label>
    </ligand>
</feature>
<feature type="binding site" evidence="2">
    <location>
        <position position="580"/>
    </location>
    <ligand>
        <name>Ca(2+)</name>
        <dbReference type="ChEBI" id="CHEBI:29108"/>
        <label>2</label>
    </ligand>
</feature>
<feature type="binding site" evidence="2">
    <location>
        <position position="582"/>
    </location>
    <ligand>
        <name>Ca(2+)</name>
        <dbReference type="ChEBI" id="CHEBI:29108"/>
        <label>2</label>
    </ligand>
</feature>
<feature type="binding site" evidence="2">
    <location>
        <position position="586"/>
    </location>
    <ligand>
        <name>Ca(2+)</name>
        <dbReference type="ChEBI" id="CHEBI:29108"/>
        <label>2</label>
    </ligand>
</feature>
<feature type="binding site" evidence="2">
    <location>
        <position position="646"/>
    </location>
    <ligand>
        <name>Ca(2+)</name>
        <dbReference type="ChEBI" id="CHEBI:29108"/>
        <label>3</label>
    </ligand>
</feature>
<feature type="binding site" evidence="2">
    <location>
        <position position="648"/>
    </location>
    <ligand>
        <name>Ca(2+)</name>
        <dbReference type="ChEBI" id="CHEBI:29108"/>
        <label>3</label>
    </ligand>
</feature>
<feature type="binding site" evidence="2">
    <location>
        <position position="650"/>
    </location>
    <ligand>
        <name>Ca(2+)</name>
        <dbReference type="ChEBI" id="CHEBI:29108"/>
        <label>3</label>
    </ligand>
</feature>
<feature type="binding site" evidence="2">
    <location>
        <position position="654"/>
    </location>
    <ligand>
        <name>Ca(2+)</name>
        <dbReference type="ChEBI" id="CHEBI:29108"/>
        <label>3</label>
    </ligand>
</feature>
<feature type="glycosylation site" description="N-linked (GlcNAc...) asparagine" evidence="3">
    <location>
        <position position="51"/>
    </location>
</feature>
<feature type="glycosylation site" description="N-linked (GlcNAc...) asparagine" evidence="3">
    <location>
        <position position="256"/>
    </location>
</feature>
<feature type="glycosylation site" description="N-linked (GlcNAc...) asparagine" evidence="3">
    <location>
        <position position="314"/>
    </location>
</feature>
<feature type="glycosylation site" description="N-linked (GlcNAc...) asparagine" evidence="3">
    <location>
        <position position="341"/>
    </location>
</feature>
<feature type="glycosylation site" description="N-linked (GlcNAc...) asparagine" evidence="3">
    <location>
        <position position="364"/>
    </location>
</feature>
<feature type="glycosylation site" description="N-linked (GlcNAc...) asparagine" evidence="3">
    <location>
        <position position="418"/>
    </location>
</feature>
<feature type="glycosylation site" description="N-linked (GlcNAc...) asparagine" evidence="3">
    <location>
        <position position="437"/>
    </location>
</feature>
<feature type="glycosylation site" description="N-linked (GlcNAc...) asparagine" evidence="3">
    <location>
        <position position="718"/>
    </location>
</feature>
<feature type="glycosylation site" description="N-linked (GlcNAc...) asparagine" evidence="3">
    <location>
        <position position="773"/>
    </location>
</feature>
<feature type="glycosylation site" description="N-linked (GlcNAc...) asparagine" evidence="3">
    <location>
        <position position="829"/>
    </location>
</feature>
<feature type="glycosylation site" description="N-linked (GlcNAc...) asparagine" evidence="3">
    <location>
        <position position="846"/>
    </location>
</feature>
<feature type="glycosylation site" description="N-linked (GlcNAc...) asparagine" evidence="3">
    <location>
        <position position="911"/>
    </location>
</feature>
<feature type="glycosylation site" description="N-linked (GlcNAc...) asparagine" evidence="3">
    <location>
        <position position="925"/>
    </location>
</feature>
<feature type="glycosylation site" description="N-linked (GlcNAc...) asparagine" evidence="3">
    <location>
        <position position="968"/>
    </location>
</feature>
<feature type="glycosylation site" description="N-linked (GlcNAc...) asparagine" evidence="3">
    <location>
        <position position="1013"/>
    </location>
</feature>
<feature type="glycosylation site" description="N-linked (GlcNAc...) asparagine" evidence="3">
    <location>
        <position position="1055"/>
    </location>
</feature>
<feature type="glycosylation site" description="N-linked (GlcNAc...) asparagine" evidence="3">
    <location>
        <position position="1086"/>
    </location>
</feature>
<feature type="disulfide bond" evidence="1">
    <location>
        <begin position="72"/>
        <end position="83"/>
    </location>
</feature>
<feature type="disulfide bond" evidence="1">
    <location>
        <begin position="130"/>
        <end position="164"/>
    </location>
</feature>
<feature type="disulfide bond" evidence="1">
    <location>
        <begin position="698"/>
        <end position="754"/>
    </location>
</feature>
<feature type="disulfide bond" evidence="1">
    <location>
        <begin position="814"/>
        <end position="820"/>
    </location>
</feature>
<feature type="disulfide bond" evidence="1">
    <location>
        <begin position="884"/>
        <end position="898"/>
    </location>
</feature>
<feature type="disulfide bond" evidence="1">
    <location>
        <begin position="998"/>
        <end position="1023"/>
    </location>
</feature>
<feature type="disulfide bond" evidence="1">
    <location>
        <begin position="1031"/>
        <end position="1047"/>
    </location>
</feature>
<feature type="sequence conflict" description="In Ref. 1; AAC52142." evidence="7" ref="1">
    <original>L</original>
    <variation>M</variation>
    <location>
        <position position="22"/>
    </location>
</feature>
<feature type="sequence conflict" description="In Ref. 1; AAC52142." evidence="7" ref="1">
    <original>Q</original>
    <variation>L</variation>
    <location>
        <position position="46"/>
    </location>
</feature>
<feature type="sequence conflict" description="In Ref. 1; AAC52142." evidence="7" ref="1">
    <original>E</original>
    <variation>G</variation>
    <location>
        <position position="207"/>
    </location>
</feature>
<feature type="sequence conflict" description="In Ref. 1; AAC52142." evidence="7" ref="1">
    <original>A</original>
    <variation>R</variation>
    <location>
        <position position="337"/>
    </location>
</feature>
<feature type="sequence conflict" description="In Ref. 1; AAC52142." evidence="7" ref="1">
    <original>H</original>
    <variation>R</variation>
    <location>
        <position position="378"/>
    </location>
</feature>
<feature type="sequence conflict" description="In Ref. 1; AAC52142." evidence="7" ref="1">
    <original>V</original>
    <variation>I</variation>
    <location>
        <position position="465"/>
    </location>
</feature>
<feature type="sequence conflict" description="In Ref. 1; AAC52142." evidence="7" ref="1">
    <original>K</original>
    <variation>N</variation>
    <location>
        <position position="696"/>
    </location>
</feature>
<feature type="sequence conflict" description="In Ref. 1; AAC52142." evidence="7" ref="1">
    <original>G</original>
    <variation>V</variation>
    <location>
        <position position="705"/>
    </location>
</feature>
<name>ITAE_MOUSE</name>
<evidence type="ECO:0000250" key="1"/>
<evidence type="ECO:0000250" key="2">
    <source>
        <dbReference type="UniProtKB" id="P08648"/>
    </source>
</evidence>
<evidence type="ECO:0000255" key="3"/>
<evidence type="ECO:0000255" key="4">
    <source>
        <dbReference type="PROSITE-ProRule" id="PRU00219"/>
    </source>
</evidence>
<evidence type="ECO:0000255" key="5">
    <source>
        <dbReference type="PROSITE-ProRule" id="PRU00803"/>
    </source>
</evidence>
<evidence type="ECO:0000256" key="6">
    <source>
        <dbReference type="SAM" id="MobiDB-lite"/>
    </source>
</evidence>
<evidence type="ECO:0000305" key="7"/>
<sequence>MKWLFHTLLCMASLKPQGAFNLDVDWAWVTALQPGAPAVLSSLLHQDPSNNQTCLLVARRSSNRNTAALYRCAISISPDEIACQPVEHICMPKGRYQGVTLVGNHNGVLVCIQVQARKFRSLNSELTGACSLLTPNLDLQAQAYFSDLEGFLDPGAHVDSGDYCRSKGGSTGEEKKSARRRRTVEEEDEEEDGTEIAIVLDGSGSIEPSDFQKAKNFISTMMRNFYEKCFECNFALVQYGAVIQTEFDLQESRDINASLAKVQSIVQVKEVTKTASAMQHVLDNIFIPSRGSRKKALKVMVVLTDGDIFGDPLNLTTVINSPKMQGVVRFAIGVGDAFKNNNTYRELKLIASDPKEAHTFKVTNYSALDGLLSKLQQHIVHMEGTVGDALQYQLAQTGFSAQILDKGQVLLGTVGAFNWSGGALLYSTQNGRGCFLNQTAKEDSRTVQYSYLGYSLAVLHKAHGVSYVAGAPRHKLRGAVFELRKEDREEDAFVRRIEGEQMGSYFGSVLCPVDIDMDGTTDFLLVAAPFYHIRGEEGRVYVYQVPEQDASFSLAHTLSGHPGLTNSRFGFAMAAVGDINQDKFTDVAIGAPLEGFGAGDGASYGSVYIYNGHSGGLYDSPSQQIRASSVASGLHYFGMSVSGGLDFNGDGLADITVGSRDSAVVLRSRPVVDLTVSMTFTPDALPMVFIGKMDVKLCFEVDSSGVASEPGLREMFLNFTVDVDVTKQRQRLQCEDSSGCQSCLRKWNGGSFLCEHFWLISTEELCEEDCFSNITIKVTYEFQTSGGRRDYPNPTLDHYKEPSAIFQLPYEKDCKNKVFCIAEIQLTTNISQQELVVGVTKEVTMNISLTNSGEDSYMTNMALNYPRNLQFKKIQKPVSPDVQCDDPKPVASVLVMNCKIGHPILKRSSVNVSVTWQLEESVFPNRTADITVTISNSNEKSLARETRSLQFRHAFIAVLSRPSVMYMNTSQSPSDHKEFFFNVHGENLFGAVFQLQICVPIKLQDFQIVRVKNLTKTQDHTECTQSQEPACGSDPVQHVKEWHSVVCAITSNKENVTVAAEISVGHTKQLLRDVSELPILGEISFNKSLYEGLNAENHRTKITVIFLKEEETRSLPLIIGSSIGGLLVLVVIIAILFKCGFFKRKYQQLNLESTRRAQLKADSLLQD</sequence>
<protein>
    <recommendedName>
        <fullName>Integrin alpha-E</fullName>
    </recommendedName>
    <alternativeName>
        <fullName>Integrin alpha M290</fullName>
    </alternativeName>
    <cdAntigenName>CD103</cdAntigenName>
    <component>
        <recommendedName>
            <fullName>Integrin alpha-E light chain</fullName>
        </recommendedName>
    </component>
    <component>
        <recommendedName>
            <fullName>Integrin alpha-E heavy chain</fullName>
        </recommendedName>
    </component>
</protein>